<evidence type="ECO:0000250" key="1"/>
<evidence type="ECO:0000255" key="2"/>
<evidence type="ECO:0000305" key="3"/>
<comment type="function">
    <text evidence="1">Activator of cell division through the inhibition of FtsZ GTPase activity, therefore promoting FtsZ assembly into bundles of protofilaments necessary for the formation of the division Z ring. It is recruited early at mid-cell but it is not essential for cell division (By similarity).</text>
</comment>
<comment type="subunit">
    <text evidence="1">Homodimer. Interacts with FtsZ (By similarity).</text>
</comment>
<comment type="subcellular location">
    <subcellularLocation>
        <location evidence="1">Cytoplasm</location>
    </subcellularLocation>
    <text evidence="1">Localizes at mid-cell. In sporulating cells, localizes near the cell poles (By similarity).</text>
</comment>
<comment type="similarity">
    <text evidence="3">Belongs to the ZapA family. Type 2 subfamily.</text>
</comment>
<dbReference type="EMBL" id="BA000004">
    <property type="protein sequence ID" value="BAB06828.1"/>
    <property type="molecule type" value="Genomic_DNA"/>
</dbReference>
<dbReference type="PIR" id="E84038">
    <property type="entry name" value="E84038"/>
</dbReference>
<dbReference type="RefSeq" id="WP_010899253.1">
    <property type="nucleotide sequence ID" value="NC_002570.2"/>
</dbReference>
<dbReference type="SMR" id="Q9K897"/>
<dbReference type="STRING" id="272558.gene:10729021"/>
<dbReference type="GeneID" id="87598633"/>
<dbReference type="KEGG" id="bha:BH3109"/>
<dbReference type="eggNOG" id="COG3027">
    <property type="taxonomic scope" value="Bacteria"/>
</dbReference>
<dbReference type="HOGENOM" id="CLU_116623_4_0_9"/>
<dbReference type="OrthoDB" id="9808604at2"/>
<dbReference type="Proteomes" id="UP000001258">
    <property type="component" value="Chromosome"/>
</dbReference>
<dbReference type="GO" id="GO:0032153">
    <property type="term" value="C:cell division site"/>
    <property type="evidence" value="ECO:0007669"/>
    <property type="project" value="TreeGrafter"/>
</dbReference>
<dbReference type="GO" id="GO:0030428">
    <property type="term" value="C:cell septum"/>
    <property type="evidence" value="ECO:0007669"/>
    <property type="project" value="TreeGrafter"/>
</dbReference>
<dbReference type="GO" id="GO:0005829">
    <property type="term" value="C:cytosol"/>
    <property type="evidence" value="ECO:0007669"/>
    <property type="project" value="TreeGrafter"/>
</dbReference>
<dbReference type="GO" id="GO:0000917">
    <property type="term" value="P:division septum assembly"/>
    <property type="evidence" value="ECO:0007669"/>
    <property type="project" value="UniProtKB-KW"/>
</dbReference>
<dbReference type="GO" id="GO:0043093">
    <property type="term" value="P:FtsZ-dependent cytokinesis"/>
    <property type="evidence" value="ECO:0007669"/>
    <property type="project" value="TreeGrafter"/>
</dbReference>
<dbReference type="GO" id="GO:0000921">
    <property type="term" value="P:septin ring assembly"/>
    <property type="evidence" value="ECO:0007669"/>
    <property type="project" value="TreeGrafter"/>
</dbReference>
<dbReference type="Gene3D" id="6.10.250.790">
    <property type="match status" value="1"/>
</dbReference>
<dbReference type="InterPro" id="IPR053712">
    <property type="entry name" value="Bac_CellDiv_Activator"/>
</dbReference>
<dbReference type="InterPro" id="IPR007838">
    <property type="entry name" value="Cell_div_ZapA-like"/>
</dbReference>
<dbReference type="InterPro" id="IPR036192">
    <property type="entry name" value="Cell_div_ZapA-like_sf"/>
</dbReference>
<dbReference type="NCBIfam" id="NF010724">
    <property type="entry name" value="PRK14126.1"/>
    <property type="match status" value="1"/>
</dbReference>
<dbReference type="PANTHER" id="PTHR34981">
    <property type="entry name" value="CELL DIVISION PROTEIN ZAPA"/>
    <property type="match status" value="1"/>
</dbReference>
<dbReference type="PANTHER" id="PTHR34981:SF1">
    <property type="entry name" value="CELL DIVISION PROTEIN ZAPA"/>
    <property type="match status" value="1"/>
</dbReference>
<dbReference type="Pfam" id="PF05164">
    <property type="entry name" value="ZapA"/>
    <property type="match status" value="1"/>
</dbReference>
<dbReference type="SUPFAM" id="SSF102829">
    <property type="entry name" value="Cell division protein ZapA-like"/>
    <property type="match status" value="1"/>
</dbReference>
<proteinExistence type="inferred from homology"/>
<organism>
    <name type="scientific">Halalkalibacterium halodurans (strain ATCC BAA-125 / DSM 18197 / FERM 7344 / JCM 9153 / C-125)</name>
    <name type="common">Bacillus halodurans</name>
    <dbReference type="NCBI Taxonomy" id="272558"/>
    <lineage>
        <taxon>Bacteria</taxon>
        <taxon>Bacillati</taxon>
        <taxon>Bacillota</taxon>
        <taxon>Bacilli</taxon>
        <taxon>Bacillales</taxon>
        <taxon>Bacillaceae</taxon>
        <taxon>Halalkalibacterium (ex Joshi et al. 2022)</taxon>
    </lineage>
</organism>
<feature type="chain" id="PRO_0000345682" description="Cell division protein ZapA">
    <location>
        <begin position="1"/>
        <end position="91"/>
    </location>
</feature>
<feature type="coiled-coil region" evidence="2">
    <location>
        <begin position="62"/>
        <end position="82"/>
    </location>
</feature>
<protein>
    <recommendedName>
        <fullName>Cell division protein ZapA</fullName>
    </recommendedName>
    <alternativeName>
        <fullName>Z ring-associated protein ZapA</fullName>
    </alternativeName>
</protein>
<accession>Q9K897</accession>
<name>ZAPA_HALH5</name>
<sequence>MKERQREKQRTTVSIYGQQYTVAGYDSPEYMKEVAAEIDAKMRELRKVNPYLDTTRLAVLTAVNVMDDLKKLEEYIRYLEQQRLTGDEKNA</sequence>
<keyword id="KW-0131">Cell cycle</keyword>
<keyword id="KW-0132">Cell division</keyword>
<keyword id="KW-0175">Coiled coil</keyword>
<keyword id="KW-0963">Cytoplasm</keyword>
<keyword id="KW-1185">Reference proteome</keyword>
<keyword id="KW-0717">Septation</keyword>
<gene>
    <name type="primary">zapA</name>
    <name type="ordered locus">BH3109</name>
</gene>
<reference key="1">
    <citation type="journal article" date="2000" name="Nucleic Acids Res.">
        <title>Complete genome sequence of the alkaliphilic bacterium Bacillus halodurans and genomic sequence comparison with Bacillus subtilis.</title>
        <authorList>
            <person name="Takami H."/>
            <person name="Nakasone K."/>
            <person name="Takaki Y."/>
            <person name="Maeno G."/>
            <person name="Sasaki R."/>
            <person name="Masui N."/>
            <person name="Fuji F."/>
            <person name="Hirama C."/>
            <person name="Nakamura Y."/>
            <person name="Ogasawara N."/>
            <person name="Kuhara S."/>
            <person name="Horikoshi K."/>
        </authorList>
    </citation>
    <scope>NUCLEOTIDE SEQUENCE [LARGE SCALE GENOMIC DNA]</scope>
    <source>
        <strain>ATCC BAA-125 / DSM 18197 / FERM 7344 / JCM 9153 / C-125</strain>
    </source>
</reference>